<name>KDSA_PROMM</name>
<protein>
    <recommendedName>
        <fullName evidence="1">2-dehydro-3-deoxyphosphooctonate aldolase</fullName>
        <ecNumber evidence="1">2.5.1.55</ecNumber>
    </recommendedName>
    <alternativeName>
        <fullName evidence="1">3-deoxy-D-manno-octulosonic acid 8-phosphate synthase</fullName>
    </alternativeName>
    <alternativeName>
        <fullName evidence="1">KDO-8-phosphate synthase</fullName>
        <shortName evidence="1">KDO 8-P synthase</shortName>
        <shortName evidence="1">KDOPS</shortName>
    </alternativeName>
    <alternativeName>
        <fullName evidence="1">Phospho-2-dehydro-3-deoxyoctonate aldolase</fullName>
    </alternativeName>
</protein>
<evidence type="ECO:0000255" key="1">
    <source>
        <dbReference type="HAMAP-Rule" id="MF_00056"/>
    </source>
</evidence>
<comment type="catalytic activity">
    <reaction evidence="1">
        <text>D-arabinose 5-phosphate + phosphoenolpyruvate + H2O = 3-deoxy-alpha-D-manno-2-octulosonate-8-phosphate + phosphate</text>
        <dbReference type="Rhea" id="RHEA:14053"/>
        <dbReference type="ChEBI" id="CHEBI:15377"/>
        <dbReference type="ChEBI" id="CHEBI:43474"/>
        <dbReference type="ChEBI" id="CHEBI:57693"/>
        <dbReference type="ChEBI" id="CHEBI:58702"/>
        <dbReference type="ChEBI" id="CHEBI:85985"/>
        <dbReference type="EC" id="2.5.1.55"/>
    </reaction>
</comment>
<comment type="pathway">
    <text evidence="1">Carbohydrate biosynthesis; 3-deoxy-D-manno-octulosonate biosynthesis; 3-deoxy-D-manno-octulosonate from D-ribulose 5-phosphate: step 2/3.</text>
</comment>
<comment type="pathway">
    <text evidence="1">Bacterial outer membrane biogenesis; lipopolysaccharide biosynthesis.</text>
</comment>
<comment type="subcellular location">
    <subcellularLocation>
        <location evidence="1">Cytoplasm</location>
    </subcellularLocation>
</comment>
<comment type="similarity">
    <text evidence="1">Belongs to the KdsA family.</text>
</comment>
<feature type="chain" id="PRO_0000187149" description="2-dehydro-3-deoxyphosphooctonate aldolase">
    <location>
        <begin position="1"/>
        <end position="283"/>
    </location>
</feature>
<dbReference type="EC" id="2.5.1.55" evidence="1"/>
<dbReference type="EMBL" id="BX548175">
    <property type="protein sequence ID" value="CAE22100.1"/>
    <property type="molecule type" value="Genomic_DNA"/>
</dbReference>
<dbReference type="RefSeq" id="WP_011131291.1">
    <property type="nucleotide sequence ID" value="NC_005071.1"/>
</dbReference>
<dbReference type="SMR" id="Q7V4M4"/>
<dbReference type="KEGG" id="pmt:PMT_1925"/>
<dbReference type="eggNOG" id="COG2877">
    <property type="taxonomic scope" value="Bacteria"/>
</dbReference>
<dbReference type="HOGENOM" id="CLU_036666_0_0_3"/>
<dbReference type="OrthoDB" id="9780456at2"/>
<dbReference type="UniPathway" id="UPA00030"/>
<dbReference type="UniPathway" id="UPA00357">
    <property type="reaction ID" value="UER00474"/>
</dbReference>
<dbReference type="Proteomes" id="UP000001423">
    <property type="component" value="Chromosome"/>
</dbReference>
<dbReference type="GO" id="GO:0005737">
    <property type="term" value="C:cytoplasm"/>
    <property type="evidence" value="ECO:0007669"/>
    <property type="project" value="UniProtKB-SubCell"/>
</dbReference>
<dbReference type="GO" id="GO:0008676">
    <property type="term" value="F:3-deoxy-8-phosphooctulonate synthase activity"/>
    <property type="evidence" value="ECO:0007669"/>
    <property type="project" value="UniProtKB-UniRule"/>
</dbReference>
<dbReference type="GO" id="GO:0019294">
    <property type="term" value="P:keto-3-deoxy-D-manno-octulosonic acid biosynthetic process"/>
    <property type="evidence" value="ECO:0007669"/>
    <property type="project" value="UniProtKB-UniRule"/>
</dbReference>
<dbReference type="Gene3D" id="3.20.20.70">
    <property type="entry name" value="Aldolase class I"/>
    <property type="match status" value="1"/>
</dbReference>
<dbReference type="HAMAP" id="MF_00056">
    <property type="entry name" value="KDO8P_synth"/>
    <property type="match status" value="1"/>
</dbReference>
<dbReference type="InterPro" id="IPR013785">
    <property type="entry name" value="Aldolase_TIM"/>
</dbReference>
<dbReference type="InterPro" id="IPR006218">
    <property type="entry name" value="DAHP1/KDSA"/>
</dbReference>
<dbReference type="InterPro" id="IPR006269">
    <property type="entry name" value="KDO8P_synthase"/>
</dbReference>
<dbReference type="NCBIfam" id="TIGR01362">
    <property type="entry name" value="KDO8P_synth"/>
    <property type="match status" value="1"/>
</dbReference>
<dbReference type="NCBIfam" id="NF003543">
    <property type="entry name" value="PRK05198.1"/>
    <property type="match status" value="1"/>
</dbReference>
<dbReference type="NCBIfam" id="NF009109">
    <property type="entry name" value="PRK12457.1"/>
    <property type="match status" value="1"/>
</dbReference>
<dbReference type="PANTHER" id="PTHR21057">
    <property type="entry name" value="PHOSPHO-2-DEHYDRO-3-DEOXYHEPTONATE ALDOLASE"/>
    <property type="match status" value="1"/>
</dbReference>
<dbReference type="Pfam" id="PF00793">
    <property type="entry name" value="DAHP_synth_1"/>
    <property type="match status" value="1"/>
</dbReference>
<dbReference type="SUPFAM" id="SSF51569">
    <property type="entry name" value="Aldolase"/>
    <property type="match status" value="1"/>
</dbReference>
<reference key="1">
    <citation type="journal article" date="2003" name="Nature">
        <title>Genome divergence in two Prochlorococcus ecotypes reflects oceanic niche differentiation.</title>
        <authorList>
            <person name="Rocap G."/>
            <person name="Larimer F.W."/>
            <person name="Lamerdin J.E."/>
            <person name="Malfatti S."/>
            <person name="Chain P."/>
            <person name="Ahlgren N.A."/>
            <person name="Arellano A."/>
            <person name="Coleman M."/>
            <person name="Hauser L."/>
            <person name="Hess W.R."/>
            <person name="Johnson Z.I."/>
            <person name="Land M.L."/>
            <person name="Lindell D."/>
            <person name="Post A.F."/>
            <person name="Regala W."/>
            <person name="Shah M."/>
            <person name="Shaw S.L."/>
            <person name="Steglich C."/>
            <person name="Sullivan M.B."/>
            <person name="Ting C.S."/>
            <person name="Tolonen A."/>
            <person name="Webb E.A."/>
            <person name="Zinser E.R."/>
            <person name="Chisholm S.W."/>
        </authorList>
    </citation>
    <scope>NUCLEOTIDE SEQUENCE [LARGE SCALE GENOMIC DNA]</scope>
    <source>
        <strain>MIT 9313</strain>
    </source>
</reference>
<organism>
    <name type="scientific">Prochlorococcus marinus (strain MIT 9313)</name>
    <dbReference type="NCBI Taxonomy" id="74547"/>
    <lineage>
        <taxon>Bacteria</taxon>
        <taxon>Bacillati</taxon>
        <taxon>Cyanobacteriota</taxon>
        <taxon>Cyanophyceae</taxon>
        <taxon>Synechococcales</taxon>
        <taxon>Prochlorococcaceae</taxon>
        <taxon>Prochlorococcus</taxon>
    </lineage>
</organism>
<sequence>MAARSIALGTIRFANDAPFVLIGGINVLESREFALEVAGHYKTVCTKLGIPLVFKASFDKANRSSIHSYRGPGLREGLEILQVVKDTHGIPVITDVHSPEEATPAAEVCDIIQLPAFLARQTDLIEAMAKTGAVINIKKPQFLSPSQMSNVVEKFRECGNENLLICERGSNFGYDNLVVDMLAFGVMKHCCNDLPLIFDVTHALQCRDPSGAASGGRRSQVVDLARSGMAVGLAGLFLESHPDPDKARCDGPSALPLALLEPFLQQVKAIDEVVKALPTLSVS</sequence>
<keyword id="KW-0963">Cytoplasm</keyword>
<keyword id="KW-0448">Lipopolysaccharide biosynthesis</keyword>
<keyword id="KW-1185">Reference proteome</keyword>
<keyword id="KW-0808">Transferase</keyword>
<accession>Q7V4M4</accession>
<gene>
    <name evidence="1" type="primary">kdsA</name>
    <name type="ordered locus">PMT_1925</name>
</gene>
<proteinExistence type="inferred from homology"/>